<gene>
    <name evidence="1" type="primary">bioD</name>
    <name type="ordered locus">CLJ_B2471</name>
</gene>
<accession>C3KZ35</accession>
<protein>
    <recommendedName>
        <fullName evidence="1">ATP-dependent dethiobiotin synthetase BioD</fullName>
        <ecNumber evidence="1">6.3.3.3</ecNumber>
    </recommendedName>
    <alternativeName>
        <fullName evidence="1">DTB synthetase</fullName>
        <shortName evidence="1">DTBS</shortName>
    </alternativeName>
    <alternativeName>
        <fullName evidence="1">Dethiobiotin synthase</fullName>
    </alternativeName>
</protein>
<reference key="1">
    <citation type="submission" date="2008-05" db="EMBL/GenBank/DDBJ databases">
        <title>Genome sequence of Clostridium botulinum Ba4 strain 657.</title>
        <authorList>
            <person name="Shrivastava S."/>
            <person name="Brown J.L."/>
            <person name="Bruce D."/>
            <person name="Detter C."/>
            <person name="Munk C."/>
            <person name="Smith L.A."/>
            <person name="Smith T.J."/>
            <person name="Sutton G."/>
            <person name="Brettin T.S."/>
        </authorList>
    </citation>
    <scope>NUCLEOTIDE SEQUENCE [LARGE SCALE GENOMIC DNA]</scope>
    <source>
        <strain>657 / Type Ba4</strain>
    </source>
</reference>
<feature type="chain" id="PRO_1000205210" description="ATP-dependent dethiobiotin synthetase BioD">
    <location>
        <begin position="1"/>
        <end position="227"/>
    </location>
</feature>
<feature type="active site" evidence="1">
    <location>
        <position position="38"/>
    </location>
</feature>
<feature type="binding site" evidence="1">
    <location>
        <begin position="13"/>
        <end position="18"/>
    </location>
    <ligand>
        <name>ATP</name>
        <dbReference type="ChEBI" id="CHEBI:30616"/>
    </ligand>
</feature>
<feature type="binding site" evidence="1">
    <location>
        <position position="17"/>
    </location>
    <ligand>
        <name>Mg(2+)</name>
        <dbReference type="ChEBI" id="CHEBI:18420"/>
    </ligand>
</feature>
<feature type="binding site" evidence="1">
    <location>
        <position position="42"/>
    </location>
    <ligand>
        <name>substrate</name>
    </ligand>
</feature>
<feature type="binding site" evidence="1">
    <location>
        <position position="55"/>
    </location>
    <ligand>
        <name>ATP</name>
        <dbReference type="ChEBI" id="CHEBI:30616"/>
    </ligand>
</feature>
<feature type="binding site" evidence="1">
    <location>
        <position position="55"/>
    </location>
    <ligand>
        <name>Mg(2+)</name>
        <dbReference type="ChEBI" id="CHEBI:18420"/>
    </ligand>
</feature>
<feature type="binding site" evidence="1">
    <location>
        <begin position="116"/>
        <end position="119"/>
    </location>
    <ligand>
        <name>ATP</name>
        <dbReference type="ChEBI" id="CHEBI:30616"/>
    </ligand>
</feature>
<feature type="binding site" evidence="1">
    <location>
        <position position="116"/>
    </location>
    <ligand>
        <name>Mg(2+)</name>
        <dbReference type="ChEBI" id="CHEBI:18420"/>
    </ligand>
</feature>
<feature type="binding site" evidence="1">
    <location>
        <begin position="179"/>
        <end position="180"/>
    </location>
    <ligand>
        <name>ATP</name>
        <dbReference type="ChEBI" id="CHEBI:30616"/>
    </ligand>
</feature>
<sequence length="227" mass="25372">MVKGIFITATGTDIGKTYITALIVKKLREFNINCGYYKAALSGAERIDGKLIAGDANYVYNIADIKGDPNDAVSYIFEQAVSPHLAAKLNNVEISMEKIKKDFSYIKNKHDYITVEGSGGIICPISMGKEKIMLENIIKSFKLPAIVVADAGLGTINSTILTLQYIKEKNISVKMILLNNYNHEDIIHIENKRYLSDNLPIPVYTCNKNSNNLEIPAEKLIEYYEEI</sequence>
<name>BIOD_CLOB6</name>
<keyword id="KW-0067">ATP-binding</keyword>
<keyword id="KW-0093">Biotin biosynthesis</keyword>
<keyword id="KW-0963">Cytoplasm</keyword>
<keyword id="KW-0436">Ligase</keyword>
<keyword id="KW-0460">Magnesium</keyword>
<keyword id="KW-0479">Metal-binding</keyword>
<keyword id="KW-0547">Nucleotide-binding</keyword>
<comment type="function">
    <text evidence="1">Catalyzes a mechanistically unusual reaction, the ATP-dependent insertion of CO2 between the N7 and N8 nitrogen atoms of 7,8-diaminopelargonic acid (DAPA, also called 7,8-diammoniononanoate) to form a ureido ring.</text>
</comment>
<comment type="catalytic activity">
    <reaction evidence="1">
        <text>(7R,8S)-7,8-diammoniononanoate + CO2 + ATP = (4R,5S)-dethiobiotin + ADP + phosphate + 3 H(+)</text>
        <dbReference type="Rhea" id="RHEA:15805"/>
        <dbReference type="ChEBI" id="CHEBI:15378"/>
        <dbReference type="ChEBI" id="CHEBI:16526"/>
        <dbReference type="ChEBI" id="CHEBI:30616"/>
        <dbReference type="ChEBI" id="CHEBI:43474"/>
        <dbReference type="ChEBI" id="CHEBI:149469"/>
        <dbReference type="ChEBI" id="CHEBI:149473"/>
        <dbReference type="ChEBI" id="CHEBI:456216"/>
        <dbReference type="EC" id="6.3.3.3"/>
    </reaction>
</comment>
<comment type="cofactor">
    <cofactor evidence="1">
        <name>Mg(2+)</name>
        <dbReference type="ChEBI" id="CHEBI:18420"/>
    </cofactor>
</comment>
<comment type="pathway">
    <text evidence="1">Cofactor biosynthesis; biotin biosynthesis; biotin from 7,8-diaminononanoate: step 1/2.</text>
</comment>
<comment type="subunit">
    <text evidence="1">Homodimer.</text>
</comment>
<comment type="subcellular location">
    <subcellularLocation>
        <location evidence="1">Cytoplasm</location>
    </subcellularLocation>
</comment>
<comment type="similarity">
    <text evidence="1">Belongs to the dethiobiotin synthetase family.</text>
</comment>
<dbReference type="EC" id="6.3.3.3" evidence="1"/>
<dbReference type="EMBL" id="CP001083">
    <property type="protein sequence ID" value="ACQ53908.1"/>
    <property type="molecule type" value="Genomic_DNA"/>
</dbReference>
<dbReference type="RefSeq" id="WP_003361992.1">
    <property type="nucleotide sequence ID" value="NC_012658.1"/>
</dbReference>
<dbReference type="SMR" id="C3KZ35"/>
<dbReference type="KEGG" id="cbi:CLJ_B2471"/>
<dbReference type="HOGENOM" id="CLU_072551_3_0_9"/>
<dbReference type="UniPathway" id="UPA00078">
    <property type="reaction ID" value="UER00161"/>
</dbReference>
<dbReference type="Proteomes" id="UP000002333">
    <property type="component" value="Chromosome"/>
</dbReference>
<dbReference type="GO" id="GO:0005829">
    <property type="term" value="C:cytosol"/>
    <property type="evidence" value="ECO:0007669"/>
    <property type="project" value="TreeGrafter"/>
</dbReference>
<dbReference type="GO" id="GO:0005524">
    <property type="term" value="F:ATP binding"/>
    <property type="evidence" value="ECO:0007669"/>
    <property type="project" value="UniProtKB-UniRule"/>
</dbReference>
<dbReference type="GO" id="GO:0004141">
    <property type="term" value="F:dethiobiotin synthase activity"/>
    <property type="evidence" value="ECO:0007669"/>
    <property type="project" value="UniProtKB-UniRule"/>
</dbReference>
<dbReference type="GO" id="GO:0000287">
    <property type="term" value="F:magnesium ion binding"/>
    <property type="evidence" value="ECO:0007669"/>
    <property type="project" value="UniProtKB-UniRule"/>
</dbReference>
<dbReference type="GO" id="GO:0009102">
    <property type="term" value="P:biotin biosynthetic process"/>
    <property type="evidence" value="ECO:0007669"/>
    <property type="project" value="UniProtKB-UniRule"/>
</dbReference>
<dbReference type="CDD" id="cd03109">
    <property type="entry name" value="DTBS"/>
    <property type="match status" value="1"/>
</dbReference>
<dbReference type="Gene3D" id="3.40.50.300">
    <property type="entry name" value="P-loop containing nucleotide triphosphate hydrolases"/>
    <property type="match status" value="1"/>
</dbReference>
<dbReference type="HAMAP" id="MF_00336">
    <property type="entry name" value="BioD"/>
    <property type="match status" value="1"/>
</dbReference>
<dbReference type="InterPro" id="IPR004472">
    <property type="entry name" value="DTB_synth_BioD"/>
</dbReference>
<dbReference type="InterPro" id="IPR027417">
    <property type="entry name" value="P-loop_NTPase"/>
</dbReference>
<dbReference type="NCBIfam" id="TIGR00347">
    <property type="entry name" value="bioD"/>
    <property type="match status" value="1"/>
</dbReference>
<dbReference type="PANTHER" id="PTHR43210:SF2">
    <property type="entry name" value="ATP-DEPENDENT DETHIOBIOTIN SYNTHETASE BIOD 2"/>
    <property type="match status" value="1"/>
</dbReference>
<dbReference type="PANTHER" id="PTHR43210">
    <property type="entry name" value="DETHIOBIOTIN SYNTHETASE"/>
    <property type="match status" value="1"/>
</dbReference>
<dbReference type="Pfam" id="PF13500">
    <property type="entry name" value="AAA_26"/>
    <property type="match status" value="1"/>
</dbReference>
<dbReference type="PIRSF" id="PIRSF006755">
    <property type="entry name" value="DTB_synth"/>
    <property type="match status" value="1"/>
</dbReference>
<dbReference type="SUPFAM" id="SSF52540">
    <property type="entry name" value="P-loop containing nucleoside triphosphate hydrolases"/>
    <property type="match status" value="1"/>
</dbReference>
<proteinExistence type="inferred from homology"/>
<organism>
    <name type="scientific">Clostridium botulinum (strain 657 / Type Ba4)</name>
    <dbReference type="NCBI Taxonomy" id="515621"/>
    <lineage>
        <taxon>Bacteria</taxon>
        <taxon>Bacillati</taxon>
        <taxon>Bacillota</taxon>
        <taxon>Clostridia</taxon>
        <taxon>Eubacteriales</taxon>
        <taxon>Clostridiaceae</taxon>
        <taxon>Clostridium</taxon>
    </lineage>
</organism>
<evidence type="ECO:0000255" key="1">
    <source>
        <dbReference type="HAMAP-Rule" id="MF_00336"/>
    </source>
</evidence>